<evidence type="ECO:0000250" key="1"/>
<evidence type="ECO:0000305" key="2"/>
<sequence>MGRRPARCYRQIKNKPCPKSRYCRGVPDPKIRIYDVGMKRKGVDEFPYCVHLVSWERENVSSEALEAARIVCNKYMTKSAGKDAFHLRVRVHPFHVLRINKMLSCAGADRLQTGMRGAFGKPQGTCARVDIGQVLLSVRCKDNNAAHASEALRRAKFKFPARQKIIESRKWGFTKFSRADYLKYKSEGRIVPDGVNAKLLANHGRLEKRAPGKAFLDAVA</sequence>
<proteinExistence type="evidence at transcript level"/>
<reference key="1">
    <citation type="journal article" date="1994" name="Hum. Mol. Genet.">
        <title>Extreme evolutionary conservation of QM, a novel c-Jun associated transcription factor.</title>
        <authorList>
            <person name="Neill J.D."/>
        </authorList>
    </citation>
    <scope>NUCLEOTIDE SEQUENCE [MRNA]</scope>
    <source>
        <strain>cv. B73</strain>
    </source>
</reference>
<keyword id="KW-1185">Reference proteome</keyword>
<keyword id="KW-0687">Ribonucleoprotein</keyword>
<keyword id="KW-0689">Ribosomal protein</keyword>
<protein>
    <recommendedName>
        <fullName evidence="2">Large ribosomal subunit protein uL16</fullName>
    </recommendedName>
    <alternativeName>
        <fullName>60S ribosomal protein L10</fullName>
    </alternativeName>
    <alternativeName>
        <fullName>QM protein homolog</fullName>
    </alternativeName>
</protein>
<comment type="subunit">
    <text evidence="1">Component of the small ribosomal subunit. Mature ribosomes consist of a small (40S) and a large (60S) subunit. The 40S subunit contains about 33 different proteins and 1 molecule of RNA (18S). The 60S subunit contains about 49 different proteins and 3 molecules of RNA (25S, 5.8S and 5S) (By similarity).</text>
</comment>
<comment type="similarity">
    <text evidence="2">Belongs to the universal ribosomal protein uL16 family.</text>
</comment>
<name>RL10_MAIZE</name>
<gene>
    <name type="primary">RPL10</name>
</gene>
<feature type="chain" id="PRO_0000147118" description="Large ribosomal subunit protein uL16">
    <location>
        <begin position="1"/>
        <end position="220"/>
    </location>
</feature>
<organism>
    <name type="scientific">Zea mays</name>
    <name type="common">Maize</name>
    <dbReference type="NCBI Taxonomy" id="4577"/>
    <lineage>
        <taxon>Eukaryota</taxon>
        <taxon>Viridiplantae</taxon>
        <taxon>Streptophyta</taxon>
        <taxon>Embryophyta</taxon>
        <taxon>Tracheophyta</taxon>
        <taxon>Spermatophyta</taxon>
        <taxon>Magnoliopsida</taxon>
        <taxon>Liliopsida</taxon>
        <taxon>Poales</taxon>
        <taxon>Poaceae</taxon>
        <taxon>PACMAD clade</taxon>
        <taxon>Panicoideae</taxon>
        <taxon>Andropogonodae</taxon>
        <taxon>Andropogoneae</taxon>
        <taxon>Tripsacinae</taxon>
        <taxon>Zea</taxon>
    </lineage>
</organism>
<accession>P45633</accession>
<dbReference type="EMBL" id="U06108">
    <property type="protein sequence ID" value="AAA17419.1"/>
    <property type="molecule type" value="mRNA"/>
</dbReference>
<dbReference type="PIR" id="T02068">
    <property type="entry name" value="T02068"/>
</dbReference>
<dbReference type="RefSeq" id="NP_001105355.1">
    <property type="nucleotide sequence ID" value="NM_001111885.1"/>
</dbReference>
<dbReference type="SMR" id="P45633"/>
<dbReference type="FunCoup" id="P45633">
    <property type="interactions" value="2541"/>
</dbReference>
<dbReference type="STRING" id="4577.P45633"/>
<dbReference type="PaxDb" id="4577-GRMZM2G087233_P01"/>
<dbReference type="GeneID" id="542298"/>
<dbReference type="KEGG" id="zma:542298"/>
<dbReference type="MaizeGDB" id="77933"/>
<dbReference type="eggNOG" id="KOG0857">
    <property type="taxonomic scope" value="Eukaryota"/>
</dbReference>
<dbReference type="InParanoid" id="P45633"/>
<dbReference type="OrthoDB" id="10258869at2759"/>
<dbReference type="Proteomes" id="UP000007305">
    <property type="component" value="Unplaced"/>
</dbReference>
<dbReference type="ExpressionAtlas" id="P45633">
    <property type="expression patterns" value="baseline and differential"/>
</dbReference>
<dbReference type="GO" id="GO:0022625">
    <property type="term" value="C:cytosolic large ribosomal subunit"/>
    <property type="evidence" value="ECO:0000318"/>
    <property type="project" value="GO_Central"/>
</dbReference>
<dbReference type="GO" id="GO:0003735">
    <property type="term" value="F:structural constituent of ribosome"/>
    <property type="evidence" value="ECO:0000318"/>
    <property type="project" value="GO_Central"/>
</dbReference>
<dbReference type="GO" id="GO:0006412">
    <property type="term" value="P:translation"/>
    <property type="evidence" value="ECO:0000318"/>
    <property type="project" value="GO_Central"/>
</dbReference>
<dbReference type="CDD" id="cd01433">
    <property type="entry name" value="Ribosomal_L16_L10e"/>
    <property type="match status" value="1"/>
</dbReference>
<dbReference type="FunFam" id="3.90.1170.10:FF:000002">
    <property type="entry name" value="60S ribosomal protein L10"/>
    <property type="match status" value="1"/>
</dbReference>
<dbReference type="Gene3D" id="3.90.1170.10">
    <property type="entry name" value="Ribosomal protein L10e/L16"/>
    <property type="match status" value="1"/>
</dbReference>
<dbReference type="InterPro" id="IPR047873">
    <property type="entry name" value="Ribosomal_uL16"/>
</dbReference>
<dbReference type="InterPro" id="IPR018255">
    <property type="entry name" value="Ribosomal_uL16_CS_euk_arc"/>
</dbReference>
<dbReference type="InterPro" id="IPR016180">
    <property type="entry name" value="Ribosomal_uL16_dom"/>
</dbReference>
<dbReference type="InterPro" id="IPR001197">
    <property type="entry name" value="Ribosomal_uL16_euk_arch"/>
</dbReference>
<dbReference type="InterPro" id="IPR036920">
    <property type="entry name" value="Ribosomal_uL16_sf"/>
</dbReference>
<dbReference type="NCBIfam" id="NF003239">
    <property type="entry name" value="PRK04199.1-4"/>
    <property type="match status" value="1"/>
</dbReference>
<dbReference type="NCBIfam" id="TIGR00279">
    <property type="entry name" value="uL16_euk_arch"/>
    <property type="match status" value="1"/>
</dbReference>
<dbReference type="PANTHER" id="PTHR11726">
    <property type="entry name" value="60S RIBOSOMAL PROTEIN L10"/>
    <property type="match status" value="1"/>
</dbReference>
<dbReference type="Pfam" id="PF00252">
    <property type="entry name" value="Ribosomal_L16"/>
    <property type="match status" value="1"/>
</dbReference>
<dbReference type="PIRSF" id="PIRSF005590">
    <property type="entry name" value="Ribosomal_L10"/>
    <property type="match status" value="1"/>
</dbReference>
<dbReference type="SUPFAM" id="SSF54686">
    <property type="entry name" value="Ribosomal protein L16p/L10e"/>
    <property type="match status" value="1"/>
</dbReference>
<dbReference type="PROSITE" id="PS01257">
    <property type="entry name" value="RIBOSOMAL_L10E"/>
    <property type="match status" value="1"/>
</dbReference>